<proteinExistence type="evidence at protein level"/>
<protein>
    <recommendedName>
        <fullName>Homeobox protein extradenticle</fullName>
        <shortName>Dpbx</shortName>
    </recommendedName>
</protein>
<organism>
    <name type="scientific">Drosophila melanogaster</name>
    <name type="common">Fruit fly</name>
    <dbReference type="NCBI Taxonomy" id="7227"/>
    <lineage>
        <taxon>Eukaryota</taxon>
        <taxon>Metazoa</taxon>
        <taxon>Ecdysozoa</taxon>
        <taxon>Arthropoda</taxon>
        <taxon>Hexapoda</taxon>
        <taxon>Insecta</taxon>
        <taxon>Pterygota</taxon>
        <taxon>Neoptera</taxon>
        <taxon>Endopterygota</taxon>
        <taxon>Diptera</taxon>
        <taxon>Brachycera</taxon>
        <taxon>Muscomorpha</taxon>
        <taxon>Ephydroidea</taxon>
        <taxon>Drosophilidae</taxon>
        <taxon>Drosophila</taxon>
        <taxon>Sophophora</taxon>
    </lineage>
</organism>
<dbReference type="EMBL" id="U33747">
    <property type="protein sequence ID" value="AAC46903.1"/>
    <property type="molecule type" value="Genomic_DNA"/>
</dbReference>
<dbReference type="EMBL" id="L19295">
    <property type="protein sequence ID" value="AAC37182.1"/>
    <property type="molecule type" value="mRNA"/>
</dbReference>
<dbReference type="EMBL" id="AE014298">
    <property type="protein sequence ID" value="AAF48555.1"/>
    <property type="molecule type" value="Genomic_DNA"/>
</dbReference>
<dbReference type="EMBL" id="AY061065">
    <property type="protein sequence ID" value="AAL28613.1"/>
    <property type="molecule type" value="mRNA"/>
</dbReference>
<dbReference type="EMBL" id="Z18864">
    <property type="protein sequence ID" value="CAA79313.1"/>
    <property type="molecule type" value="mRNA"/>
</dbReference>
<dbReference type="PIR" id="A48840">
    <property type="entry name" value="A48840"/>
</dbReference>
<dbReference type="RefSeq" id="NP_001259592.1">
    <property type="nucleotide sequence ID" value="NM_001272663.2"/>
</dbReference>
<dbReference type="RefSeq" id="NP_001259593.1">
    <property type="nucleotide sequence ID" value="NM_001272664.1"/>
</dbReference>
<dbReference type="RefSeq" id="NP_523360.1">
    <property type="nucleotide sequence ID" value="NM_078636.5"/>
</dbReference>
<dbReference type="RefSeq" id="NP_727923.1">
    <property type="nucleotide sequence ID" value="NM_167478.3"/>
</dbReference>
<dbReference type="PDB" id="1B8I">
    <property type="method" value="X-ray"/>
    <property type="resolution" value="2.40 A"/>
    <property type="chains" value="B=238-300"/>
</dbReference>
<dbReference type="PDB" id="2R5Y">
    <property type="method" value="X-ray"/>
    <property type="resolution" value="2.60 A"/>
    <property type="chains" value="B=238-300"/>
</dbReference>
<dbReference type="PDB" id="2R5Z">
    <property type="method" value="X-ray"/>
    <property type="resolution" value="2.60 A"/>
    <property type="chains" value="B=238-300"/>
</dbReference>
<dbReference type="PDB" id="4CYC">
    <property type="method" value="X-ray"/>
    <property type="resolution" value="2.36 A"/>
    <property type="chains" value="B=238-312"/>
</dbReference>
<dbReference type="PDB" id="4UUS">
    <property type="method" value="X-ray"/>
    <property type="resolution" value="2.55 A"/>
    <property type="chains" value="B/F=238-312"/>
</dbReference>
<dbReference type="PDB" id="5ZJQ">
    <property type="method" value="X-ray"/>
    <property type="resolution" value="2.44 A"/>
    <property type="chains" value="B=237-310"/>
</dbReference>
<dbReference type="PDB" id="5ZJR">
    <property type="method" value="X-ray"/>
    <property type="resolution" value="3.03 A"/>
    <property type="chains" value="B=237-310"/>
</dbReference>
<dbReference type="PDB" id="5ZJS">
    <property type="method" value="X-ray"/>
    <property type="resolution" value="2.90 A"/>
    <property type="chains" value="B=237-310"/>
</dbReference>
<dbReference type="PDB" id="5ZJT">
    <property type="method" value="X-ray"/>
    <property type="resolution" value="2.40 A"/>
    <property type="chains" value="B=237-310"/>
</dbReference>
<dbReference type="PDB" id="7YB4">
    <property type="method" value="NMR"/>
    <property type="chains" value="A=238-300"/>
</dbReference>
<dbReference type="PDBsum" id="1B8I"/>
<dbReference type="PDBsum" id="2R5Y"/>
<dbReference type="PDBsum" id="2R5Z"/>
<dbReference type="PDBsum" id="4CYC"/>
<dbReference type="PDBsum" id="4UUS"/>
<dbReference type="PDBsum" id="5ZJQ"/>
<dbReference type="PDBsum" id="5ZJR"/>
<dbReference type="PDBsum" id="5ZJS"/>
<dbReference type="PDBsum" id="5ZJT"/>
<dbReference type="PDBsum" id="7YB4"/>
<dbReference type="SMR" id="P40427"/>
<dbReference type="BioGRID" id="58911">
    <property type="interactions" value="62"/>
</dbReference>
<dbReference type="DIP" id="DIP-18773N"/>
<dbReference type="FunCoup" id="P40427">
    <property type="interactions" value="1218"/>
</dbReference>
<dbReference type="IntAct" id="P40427">
    <property type="interactions" value="18"/>
</dbReference>
<dbReference type="MINT" id="P40427"/>
<dbReference type="STRING" id="7227.FBpp0305514"/>
<dbReference type="PaxDb" id="7227-FBpp0073940"/>
<dbReference type="DNASU" id="32567"/>
<dbReference type="EnsemblMetazoa" id="FBtr0074135">
    <property type="protein sequence ID" value="FBpp0073940"/>
    <property type="gene ID" value="FBgn0000611"/>
</dbReference>
<dbReference type="EnsemblMetazoa" id="FBtr0074137">
    <property type="protein sequence ID" value="FBpp0073942"/>
    <property type="gene ID" value="FBgn0000611"/>
</dbReference>
<dbReference type="EnsemblMetazoa" id="FBtr0333322">
    <property type="protein sequence ID" value="FBpp0305514"/>
    <property type="gene ID" value="FBgn0000611"/>
</dbReference>
<dbReference type="EnsemblMetazoa" id="FBtr0333323">
    <property type="protein sequence ID" value="FBpp0305515"/>
    <property type="gene ID" value="FBgn0000611"/>
</dbReference>
<dbReference type="GeneID" id="32567"/>
<dbReference type="KEGG" id="dme:Dmel_CG8933"/>
<dbReference type="UCSC" id="CG8933-RA">
    <property type="organism name" value="d. melanogaster"/>
</dbReference>
<dbReference type="AGR" id="FB:FBgn0000611"/>
<dbReference type="CTD" id="32567"/>
<dbReference type="FlyBase" id="FBgn0000611">
    <property type="gene designation" value="exd"/>
</dbReference>
<dbReference type="VEuPathDB" id="VectorBase:FBgn0000611"/>
<dbReference type="eggNOG" id="KOG0774">
    <property type="taxonomic scope" value="Eukaryota"/>
</dbReference>
<dbReference type="GeneTree" id="ENSGT00940000169272"/>
<dbReference type="HOGENOM" id="CLU_041153_1_1_1"/>
<dbReference type="InParanoid" id="P40427"/>
<dbReference type="OMA" id="DLARQCN"/>
<dbReference type="OrthoDB" id="4187154at2759"/>
<dbReference type="PhylomeDB" id="P40427"/>
<dbReference type="SignaLink" id="P40427"/>
<dbReference type="BioGRID-ORCS" id="32567">
    <property type="hits" value="0 hits in 3 CRISPR screens"/>
</dbReference>
<dbReference type="ChiTaRS" id="exd">
    <property type="organism name" value="fly"/>
</dbReference>
<dbReference type="EvolutionaryTrace" id="P40427"/>
<dbReference type="GenomeRNAi" id="32567"/>
<dbReference type="PRO" id="PR:P40427"/>
<dbReference type="Proteomes" id="UP000000803">
    <property type="component" value="Chromosome X"/>
</dbReference>
<dbReference type="Bgee" id="FBgn0000611">
    <property type="expression patterns" value="Expressed in wing disc and 280 other cell types or tissues"/>
</dbReference>
<dbReference type="ExpressionAtlas" id="P40427">
    <property type="expression patterns" value="baseline and differential"/>
</dbReference>
<dbReference type="GO" id="GO:0005737">
    <property type="term" value="C:cytoplasm"/>
    <property type="evidence" value="ECO:0000314"/>
    <property type="project" value="FlyBase"/>
</dbReference>
<dbReference type="GO" id="GO:0005634">
    <property type="term" value="C:nucleus"/>
    <property type="evidence" value="ECO:0000314"/>
    <property type="project" value="FlyBase"/>
</dbReference>
<dbReference type="GO" id="GO:0032993">
    <property type="term" value="C:protein-DNA complex"/>
    <property type="evidence" value="ECO:0000314"/>
    <property type="project" value="CAFA"/>
</dbReference>
<dbReference type="GO" id="GO:0090575">
    <property type="term" value="C:RNA polymerase II transcription regulator complex"/>
    <property type="evidence" value="ECO:0000353"/>
    <property type="project" value="FlyBase"/>
</dbReference>
<dbReference type="GO" id="GO:0005667">
    <property type="term" value="C:transcription regulator complex"/>
    <property type="evidence" value="ECO:0000314"/>
    <property type="project" value="UniProtKB"/>
</dbReference>
<dbReference type="GO" id="GO:0000987">
    <property type="term" value="F:cis-regulatory region sequence-specific DNA binding"/>
    <property type="evidence" value="ECO:0000314"/>
    <property type="project" value="FlyBase"/>
</dbReference>
<dbReference type="GO" id="GO:0003677">
    <property type="term" value="F:DNA binding"/>
    <property type="evidence" value="ECO:0000314"/>
    <property type="project" value="UniProtKB"/>
</dbReference>
<dbReference type="GO" id="GO:0003700">
    <property type="term" value="F:DNA-binding transcription factor activity"/>
    <property type="evidence" value="ECO:0000315"/>
    <property type="project" value="UniProtKB"/>
</dbReference>
<dbReference type="GO" id="GO:0000981">
    <property type="term" value="F:DNA-binding transcription factor activity, RNA polymerase II-specific"/>
    <property type="evidence" value="ECO:0000314"/>
    <property type="project" value="FlyBase"/>
</dbReference>
<dbReference type="GO" id="GO:0140297">
    <property type="term" value="F:DNA-binding transcription factor binding"/>
    <property type="evidence" value="ECO:0000353"/>
    <property type="project" value="FlyBase"/>
</dbReference>
<dbReference type="GO" id="GO:0046982">
    <property type="term" value="F:protein heterodimerization activity"/>
    <property type="evidence" value="ECO:0000314"/>
    <property type="project" value="CAFA"/>
</dbReference>
<dbReference type="GO" id="GO:0043565">
    <property type="term" value="F:sequence-specific DNA binding"/>
    <property type="evidence" value="ECO:0000314"/>
    <property type="project" value="FlyBase"/>
</dbReference>
<dbReference type="GO" id="GO:0003713">
    <property type="term" value="F:transcription coactivator activity"/>
    <property type="evidence" value="ECO:0000314"/>
    <property type="project" value="FlyBase"/>
</dbReference>
<dbReference type="GO" id="GO:0003712">
    <property type="term" value="F:transcription coregulator activity"/>
    <property type="evidence" value="ECO:0000314"/>
    <property type="project" value="CAFA"/>
</dbReference>
<dbReference type="GO" id="GO:0009887">
    <property type="term" value="P:animal organ morphogenesis"/>
    <property type="evidence" value="ECO:0000318"/>
    <property type="project" value="GO_Central"/>
</dbReference>
<dbReference type="GO" id="GO:0007420">
    <property type="term" value="P:brain development"/>
    <property type="evidence" value="ECO:0000315"/>
    <property type="project" value="FlyBase"/>
</dbReference>
<dbReference type="GO" id="GO:0048568">
    <property type="term" value="P:embryonic organ development"/>
    <property type="evidence" value="ECO:0000318"/>
    <property type="project" value="GO_Central"/>
</dbReference>
<dbReference type="GO" id="GO:0001654">
    <property type="term" value="P:eye development"/>
    <property type="evidence" value="ECO:0000315"/>
    <property type="project" value="UniProtKB"/>
</dbReference>
<dbReference type="GO" id="GO:0048666">
    <property type="term" value="P:neuron development"/>
    <property type="evidence" value="ECO:0000318"/>
    <property type="project" value="GO_Central"/>
</dbReference>
<dbReference type="GO" id="GO:0007438">
    <property type="term" value="P:oenocyte development"/>
    <property type="evidence" value="ECO:0000315"/>
    <property type="project" value="FlyBase"/>
</dbReference>
<dbReference type="GO" id="GO:0007422">
    <property type="term" value="P:peripheral nervous system development"/>
    <property type="evidence" value="ECO:0000315"/>
    <property type="project" value="UniProtKB"/>
</dbReference>
<dbReference type="GO" id="GO:0045893">
    <property type="term" value="P:positive regulation of DNA-templated transcription"/>
    <property type="evidence" value="ECO:0000314"/>
    <property type="project" value="CAFA"/>
</dbReference>
<dbReference type="GO" id="GO:0045944">
    <property type="term" value="P:positive regulation of transcription by RNA polymerase II"/>
    <property type="evidence" value="ECO:0000314"/>
    <property type="project" value="FlyBase"/>
</dbReference>
<dbReference type="GO" id="GO:0042659">
    <property type="term" value="P:regulation of cell fate specification"/>
    <property type="evidence" value="ECO:0000315"/>
    <property type="project" value="FlyBase"/>
</dbReference>
<dbReference type="GO" id="GO:0006357">
    <property type="term" value="P:regulation of transcription by RNA polymerase II"/>
    <property type="evidence" value="ECO:0000315"/>
    <property type="project" value="UniProtKB"/>
</dbReference>
<dbReference type="GO" id="GO:0007432">
    <property type="term" value="P:salivary gland boundary specification"/>
    <property type="evidence" value="ECO:0000304"/>
    <property type="project" value="FlyBase"/>
</dbReference>
<dbReference type="GO" id="GO:0007525">
    <property type="term" value="P:somatic muscle development"/>
    <property type="evidence" value="ECO:0000315"/>
    <property type="project" value="FlyBase"/>
</dbReference>
<dbReference type="CDD" id="cd00086">
    <property type="entry name" value="homeodomain"/>
    <property type="match status" value="1"/>
</dbReference>
<dbReference type="FunFam" id="1.10.10.60:FF:000008">
    <property type="entry name" value="Pre-B-cell leukemia transcription factor 1"/>
    <property type="match status" value="1"/>
</dbReference>
<dbReference type="Gene3D" id="1.10.10.60">
    <property type="entry name" value="Homeodomain-like"/>
    <property type="match status" value="1"/>
</dbReference>
<dbReference type="InterPro" id="IPR001356">
    <property type="entry name" value="HD"/>
</dbReference>
<dbReference type="InterPro" id="IPR017970">
    <property type="entry name" value="Homeobox_CS"/>
</dbReference>
<dbReference type="InterPro" id="IPR009057">
    <property type="entry name" value="Homeodomain-like_sf"/>
</dbReference>
<dbReference type="InterPro" id="IPR008422">
    <property type="entry name" value="KN_HD"/>
</dbReference>
<dbReference type="InterPro" id="IPR005542">
    <property type="entry name" value="PBX_PBC_dom"/>
</dbReference>
<dbReference type="InterPro" id="IPR050224">
    <property type="entry name" value="TALE_homeobox"/>
</dbReference>
<dbReference type="PANTHER" id="PTHR11850">
    <property type="entry name" value="HOMEOBOX PROTEIN TRANSCRIPTION FACTORS"/>
    <property type="match status" value="1"/>
</dbReference>
<dbReference type="Pfam" id="PF05920">
    <property type="entry name" value="Homeobox_KN"/>
    <property type="match status" value="1"/>
</dbReference>
<dbReference type="Pfam" id="PF03792">
    <property type="entry name" value="PBC"/>
    <property type="match status" value="1"/>
</dbReference>
<dbReference type="SMART" id="SM00389">
    <property type="entry name" value="HOX"/>
    <property type="match status" value="1"/>
</dbReference>
<dbReference type="SUPFAM" id="SSF46689">
    <property type="entry name" value="Homeodomain-like"/>
    <property type="match status" value="1"/>
</dbReference>
<dbReference type="PROSITE" id="PS00027">
    <property type="entry name" value="HOMEOBOX_1"/>
    <property type="match status" value="1"/>
</dbReference>
<dbReference type="PROSITE" id="PS50071">
    <property type="entry name" value="HOMEOBOX_2"/>
    <property type="match status" value="1"/>
</dbReference>
<dbReference type="PROSITE" id="PS51978">
    <property type="entry name" value="PBC"/>
    <property type="match status" value="1"/>
</dbReference>
<comment type="function">
    <text evidence="5 6 7 8 9 10">Transcription factor which acts with the selector homeodomain proteins altering the regulation of downstream target genes such as wingless (wg), teashirt (tsh) and decapentaplegic (dpp), thus affecting segmental identity. Delimits the eye field and prevent inappropriate eye development. Required for proper localization of chordotonal organs within the peripheral nervous system.</text>
</comment>
<comment type="subunit">
    <text evidence="4 8 9 10">Interacts with Ubx and hth.</text>
</comment>
<comment type="interaction">
    <interactant intactId="EBI-101537">
        <id>P40427</id>
    </interactant>
    <interactant intactId="EBI-458925">
        <id>P07548</id>
        <label>Dfd</label>
    </interactant>
    <organismsDiffer>false</organismsDiffer>
    <experiments>2</experiments>
</comment>
<comment type="interaction">
    <interactant intactId="EBI-101537">
        <id>P40427</id>
    </interactant>
    <interactant intactId="EBI-137488">
        <id>O46339</id>
        <label>hth</label>
    </interactant>
    <organismsDiffer>false</organismsDiffer>
    <experiments>16</experiments>
</comment>
<comment type="interaction">
    <interactant intactId="EBI-101537">
        <id>P40427</id>
    </interactant>
    <interactant intactId="EBI-666569">
        <id>P09077</id>
        <label>Scr</label>
    </interactant>
    <organismsDiffer>false</organismsDiffer>
    <experiments>3</experiments>
</comment>
<comment type="interaction">
    <interactant intactId="EBI-101537">
        <id>P40427</id>
    </interactant>
    <interactant intactId="EBI-202590">
        <id>P83949</id>
        <label>Ubx</label>
    </interactant>
    <organismsDiffer>false</organismsDiffer>
    <experiments>5</experiments>
</comment>
<comment type="subcellular location">
    <subcellularLocation>
        <location evidence="1 8 9 10">Nucleus</location>
    </subcellularLocation>
    <text>Nuclear translocation requires interaction with hth.</text>
</comment>
<comment type="tissue specificity">
    <text evidence="5 6">Prior to full germband retraction it is ubiquitously present, after germband retraction, mostly present in the anterior portion of the ventral nerve cord.</text>
</comment>
<comment type="developmental stage">
    <text evidence="5 6 7 8">Expressed both maternally and zygotically at all stages of development.</text>
</comment>
<comment type="disruption phenotype">
    <text evidence="7">Weak posterior-directed transformations in all 3 thoracic segments and in the anterior segments of the abdomen.</text>
</comment>
<comment type="similarity">
    <text evidence="11">Belongs to the TALE/PBX homeobox family.</text>
</comment>
<gene>
    <name type="primary">exd</name>
    <name type="ORF">CG8933</name>
</gene>
<feature type="chain" id="PRO_0000048875" description="Homeobox protein extradenticle">
    <location>
        <begin position="1"/>
        <end position="376"/>
    </location>
</feature>
<feature type="domain" description="PBC" evidence="2">
    <location>
        <begin position="38"/>
        <end position="237"/>
    </location>
</feature>
<feature type="DNA-binding region" description="Homeobox; TALE-type" evidence="1">
    <location>
        <begin position="238"/>
        <end position="300"/>
    </location>
</feature>
<feature type="region of interest" description="Disordered" evidence="3">
    <location>
        <begin position="1"/>
        <end position="37"/>
    </location>
</feature>
<feature type="region of interest" description="PBC-A" evidence="2">
    <location>
        <begin position="45"/>
        <end position="124"/>
    </location>
</feature>
<feature type="region of interest" description="PBC-B" evidence="2">
    <location>
        <begin position="127"/>
        <end position="237"/>
    </location>
</feature>
<feature type="region of interest" description="Disordered" evidence="3">
    <location>
        <begin position="318"/>
        <end position="376"/>
    </location>
</feature>
<feature type="compositionally biased region" description="Low complexity" evidence="3">
    <location>
        <begin position="318"/>
        <end position="335"/>
    </location>
</feature>
<feature type="sequence conflict" description="In Ref. 5; CAA79313." evidence="11" ref="5">
    <original>E</original>
    <variation>G</variation>
    <location>
        <position position="98"/>
    </location>
</feature>
<feature type="sequence conflict" description="In Ref. 5; CAA79313." evidence="11" ref="5">
    <original>M</original>
    <variation>K</variation>
    <location>
        <position position="344"/>
    </location>
</feature>
<feature type="sequence conflict" description="In Ref. 5; CAA79313." evidence="11" ref="5">
    <original>M</original>
    <variation>T</variation>
    <location>
        <position position="363"/>
    </location>
</feature>
<feature type="turn" evidence="13">
    <location>
        <begin position="238"/>
        <end position="241"/>
    </location>
</feature>
<feature type="helix" evidence="12">
    <location>
        <begin position="247"/>
        <end position="259"/>
    </location>
</feature>
<feature type="turn" evidence="12">
    <location>
        <begin position="260"/>
        <end position="262"/>
    </location>
</feature>
<feature type="helix" evidence="12">
    <location>
        <begin position="268"/>
        <end position="278"/>
    </location>
</feature>
<feature type="helix" evidence="12">
    <location>
        <begin position="282"/>
        <end position="298"/>
    </location>
</feature>
<feature type="turn" evidence="14">
    <location>
        <begin position="299"/>
        <end position="301"/>
    </location>
</feature>
<feature type="helix" evidence="14">
    <location>
        <begin position="306"/>
        <end position="309"/>
    </location>
</feature>
<accession>P40427</accession>
<accession>A4V4K5</accession>
<accession>Q0KHS1</accession>
<accession>Q9V3S2</accession>
<reference key="1">
    <citation type="journal article" date="1993" name="Cell">
        <title>Extradenticle, a regulator of homeotic gene activity, is a homolog of the homeobox-containing human proto-oncogene pbx1.</title>
        <authorList>
            <person name="Rauskolb C."/>
            <person name="Peifer M."/>
            <person name="Wieschaus E."/>
        </authorList>
    </citation>
    <scope>NUCLEOTIDE SEQUENCE [GENOMIC DNA / MRNA]</scope>
    <scope>FUNCTION</scope>
    <scope>DEVELOPMENTAL STAGE</scope>
    <scope>DISRUPTION PHENOTYPE</scope>
</reference>
<reference key="2">
    <citation type="journal article" date="2000" name="Science">
        <title>The genome sequence of Drosophila melanogaster.</title>
        <authorList>
            <person name="Adams M.D."/>
            <person name="Celniker S.E."/>
            <person name="Holt R.A."/>
            <person name="Evans C.A."/>
            <person name="Gocayne J.D."/>
            <person name="Amanatides P.G."/>
            <person name="Scherer S.E."/>
            <person name="Li P.W."/>
            <person name="Hoskins R.A."/>
            <person name="Galle R.F."/>
            <person name="George R.A."/>
            <person name="Lewis S.E."/>
            <person name="Richards S."/>
            <person name="Ashburner M."/>
            <person name="Henderson S.N."/>
            <person name="Sutton G.G."/>
            <person name="Wortman J.R."/>
            <person name="Yandell M.D."/>
            <person name="Zhang Q."/>
            <person name="Chen L.X."/>
            <person name="Brandon R.C."/>
            <person name="Rogers Y.-H.C."/>
            <person name="Blazej R.G."/>
            <person name="Champe M."/>
            <person name="Pfeiffer B.D."/>
            <person name="Wan K.H."/>
            <person name="Doyle C."/>
            <person name="Baxter E.G."/>
            <person name="Helt G."/>
            <person name="Nelson C.R."/>
            <person name="Miklos G.L.G."/>
            <person name="Abril J.F."/>
            <person name="Agbayani A."/>
            <person name="An H.-J."/>
            <person name="Andrews-Pfannkoch C."/>
            <person name="Baldwin D."/>
            <person name="Ballew R.M."/>
            <person name="Basu A."/>
            <person name="Baxendale J."/>
            <person name="Bayraktaroglu L."/>
            <person name="Beasley E.M."/>
            <person name="Beeson K.Y."/>
            <person name="Benos P.V."/>
            <person name="Berman B.P."/>
            <person name="Bhandari D."/>
            <person name="Bolshakov S."/>
            <person name="Borkova D."/>
            <person name="Botchan M.R."/>
            <person name="Bouck J."/>
            <person name="Brokstein P."/>
            <person name="Brottier P."/>
            <person name="Burtis K.C."/>
            <person name="Busam D.A."/>
            <person name="Butler H."/>
            <person name="Cadieu E."/>
            <person name="Center A."/>
            <person name="Chandra I."/>
            <person name="Cherry J.M."/>
            <person name="Cawley S."/>
            <person name="Dahlke C."/>
            <person name="Davenport L.B."/>
            <person name="Davies P."/>
            <person name="de Pablos B."/>
            <person name="Delcher A."/>
            <person name="Deng Z."/>
            <person name="Mays A.D."/>
            <person name="Dew I."/>
            <person name="Dietz S.M."/>
            <person name="Dodson K."/>
            <person name="Doup L.E."/>
            <person name="Downes M."/>
            <person name="Dugan-Rocha S."/>
            <person name="Dunkov B.C."/>
            <person name="Dunn P."/>
            <person name="Durbin K.J."/>
            <person name="Evangelista C.C."/>
            <person name="Ferraz C."/>
            <person name="Ferriera S."/>
            <person name="Fleischmann W."/>
            <person name="Fosler C."/>
            <person name="Gabrielian A.E."/>
            <person name="Garg N.S."/>
            <person name="Gelbart W.M."/>
            <person name="Glasser K."/>
            <person name="Glodek A."/>
            <person name="Gong F."/>
            <person name="Gorrell J.H."/>
            <person name="Gu Z."/>
            <person name="Guan P."/>
            <person name="Harris M."/>
            <person name="Harris N.L."/>
            <person name="Harvey D.A."/>
            <person name="Heiman T.J."/>
            <person name="Hernandez J.R."/>
            <person name="Houck J."/>
            <person name="Hostin D."/>
            <person name="Houston K.A."/>
            <person name="Howland T.J."/>
            <person name="Wei M.-H."/>
            <person name="Ibegwam C."/>
            <person name="Jalali M."/>
            <person name="Kalush F."/>
            <person name="Karpen G.H."/>
            <person name="Ke Z."/>
            <person name="Kennison J.A."/>
            <person name="Ketchum K.A."/>
            <person name="Kimmel B.E."/>
            <person name="Kodira C.D."/>
            <person name="Kraft C.L."/>
            <person name="Kravitz S."/>
            <person name="Kulp D."/>
            <person name="Lai Z."/>
            <person name="Lasko P."/>
            <person name="Lei Y."/>
            <person name="Levitsky A.A."/>
            <person name="Li J.H."/>
            <person name="Li Z."/>
            <person name="Liang Y."/>
            <person name="Lin X."/>
            <person name="Liu X."/>
            <person name="Mattei B."/>
            <person name="McIntosh T.C."/>
            <person name="McLeod M.P."/>
            <person name="McPherson D."/>
            <person name="Merkulov G."/>
            <person name="Milshina N.V."/>
            <person name="Mobarry C."/>
            <person name="Morris J."/>
            <person name="Moshrefi A."/>
            <person name="Mount S.M."/>
            <person name="Moy M."/>
            <person name="Murphy B."/>
            <person name="Murphy L."/>
            <person name="Muzny D.M."/>
            <person name="Nelson D.L."/>
            <person name="Nelson D.R."/>
            <person name="Nelson K.A."/>
            <person name="Nixon K."/>
            <person name="Nusskern D.R."/>
            <person name="Pacleb J.M."/>
            <person name="Palazzolo M."/>
            <person name="Pittman G.S."/>
            <person name="Pan S."/>
            <person name="Pollard J."/>
            <person name="Puri V."/>
            <person name="Reese M.G."/>
            <person name="Reinert K."/>
            <person name="Remington K."/>
            <person name="Saunders R.D.C."/>
            <person name="Scheeler F."/>
            <person name="Shen H."/>
            <person name="Shue B.C."/>
            <person name="Siden-Kiamos I."/>
            <person name="Simpson M."/>
            <person name="Skupski M.P."/>
            <person name="Smith T.J."/>
            <person name="Spier E."/>
            <person name="Spradling A.C."/>
            <person name="Stapleton M."/>
            <person name="Strong R."/>
            <person name="Sun E."/>
            <person name="Svirskas R."/>
            <person name="Tector C."/>
            <person name="Turner R."/>
            <person name="Venter E."/>
            <person name="Wang A.H."/>
            <person name="Wang X."/>
            <person name="Wang Z.-Y."/>
            <person name="Wassarman D.A."/>
            <person name="Weinstock G.M."/>
            <person name="Weissenbach J."/>
            <person name="Williams S.M."/>
            <person name="Woodage T."/>
            <person name="Worley K.C."/>
            <person name="Wu D."/>
            <person name="Yang S."/>
            <person name="Yao Q.A."/>
            <person name="Ye J."/>
            <person name="Yeh R.-F."/>
            <person name="Zaveri J.S."/>
            <person name="Zhan M."/>
            <person name="Zhang G."/>
            <person name="Zhao Q."/>
            <person name="Zheng L."/>
            <person name="Zheng X.H."/>
            <person name="Zhong F.N."/>
            <person name="Zhong W."/>
            <person name="Zhou X."/>
            <person name="Zhu S.C."/>
            <person name="Zhu X."/>
            <person name="Smith H.O."/>
            <person name="Gibbs R.A."/>
            <person name="Myers E.W."/>
            <person name="Rubin G.M."/>
            <person name="Venter J.C."/>
        </authorList>
    </citation>
    <scope>NUCLEOTIDE SEQUENCE [LARGE SCALE GENOMIC DNA]</scope>
    <source>
        <strain>Berkeley</strain>
    </source>
</reference>
<reference key="3">
    <citation type="journal article" date="2002" name="Genome Biol.">
        <title>Annotation of the Drosophila melanogaster euchromatic genome: a systematic review.</title>
        <authorList>
            <person name="Misra S."/>
            <person name="Crosby M.A."/>
            <person name="Mungall C.J."/>
            <person name="Matthews B.B."/>
            <person name="Campbell K.S."/>
            <person name="Hradecky P."/>
            <person name="Huang Y."/>
            <person name="Kaminker J.S."/>
            <person name="Millburn G.H."/>
            <person name="Prochnik S.E."/>
            <person name="Smith C.D."/>
            <person name="Tupy J.L."/>
            <person name="Whitfield E.J."/>
            <person name="Bayraktaroglu L."/>
            <person name="Berman B.P."/>
            <person name="Bettencourt B.R."/>
            <person name="Celniker S.E."/>
            <person name="de Grey A.D.N.J."/>
            <person name="Drysdale R.A."/>
            <person name="Harris N.L."/>
            <person name="Richter J."/>
            <person name="Russo S."/>
            <person name="Schroeder A.J."/>
            <person name="Shu S.Q."/>
            <person name="Stapleton M."/>
            <person name="Yamada C."/>
            <person name="Ashburner M."/>
            <person name="Gelbart W.M."/>
            <person name="Rubin G.M."/>
            <person name="Lewis S.E."/>
        </authorList>
    </citation>
    <scope>GENOME REANNOTATION</scope>
    <source>
        <strain>Berkeley</strain>
    </source>
</reference>
<reference key="4">
    <citation type="journal article" date="2002" name="Genome Biol.">
        <title>A Drosophila full-length cDNA resource.</title>
        <authorList>
            <person name="Stapleton M."/>
            <person name="Carlson J.W."/>
            <person name="Brokstein P."/>
            <person name="Yu C."/>
            <person name="Champe M."/>
            <person name="George R.A."/>
            <person name="Guarin H."/>
            <person name="Kronmiller B."/>
            <person name="Pacleb J.M."/>
            <person name="Park S."/>
            <person name="Wan K.H."/>
            <person name="Rubin G.M."/>
            <person name="Celniker S.E."/>
        </authorList>
    </citation>
    <scope>NUCLEOTIDE SEQUENCE [LARGE SCALE MRNA]</scope>
    <source>
        <strain>Berkeley</strain>
        <tissue>Embryo</tissue>
    </source>
</reference>
<reference key="5">
    <citation type="journal article" date="1993" name="Mech. Dev.">
        <title>Dpbx, a new homeobox gene closely related to the human proto-oncogene pbx1 molecular structure and developmental expression.</title>
        <authorList>
            <person name="Flegel W.A."/>
            <person name="Singson A.W."/>
            <person name="Margolis J.S."/>
            <person name="Bang A.G."/>
            <person name="Posakony J.W."/>
            <person name="Murre C."/>
        </authorList>
    </citation>
    <scope>NUCLEOTIDE SEQUENCE [MRNA] OF 1-365</scope>
    <scope>FUNCTION</scope>
    <scope>TISSUE SPECIFICITY</scope>
    <scope>DEVELOPMENTAL STAGE</scope>
    <source>
        <strain>y(2)w(bf)</strain>
    </source>
</reference>
<reference key="6">
    <citation type="journal article" date="1994" name="EMBO J.">
        <title>Coordinate regulation of downstream genes by extradenticle and the homeotic selector proteins.</title>
        <authorList>
            <person name="Rauskolb C."/>
            <person name="Wieschaus E."/>
        </authorList>
    </citation>
    <scope>FUNCTION</scope>
    <scope>TISSUE SPECIFICITY</scope>
    <scope>DEVELOPMENTAL STAGE</scope>
</reference>
<reference key="7">
    <citation type="journal article" date="1997" name="Cell">
        <title>Nuclear translocation of extradenticle requires homothorax, which encodes an extradenticle-related homeodomain protein.</title>
        <authorList>
            <person name="Rieckhof G.E."/>
            <person name="Casares F."/>
            <person name="Ryoo H.D."/>
            <person name="Abu-Shaar M."/>
            <person name="Mann R.S."/>
        </authorList>
    </citation>
    <scope>FUNCTION</scope>
    <scope>INTERACTION WITH HTH</scope>
    <scope>SUBCELLULAR LOCATION</scope>
    <scope>DEVELOPMENTAL STAGE</scope>
    <source>
        <tissue>Antenna</tissue>
    </source>
</reference>
<reference key="8">
    <citation type="journal article" date="1998" name="Development">
        <title>Dorsotonals/homothorax, the Drosophila homologue of meis1, interacts with extradenticle in patterning of the embryonic PNS.</title>
        <authorList>
            <person name="Kurant E."/>
            <person name="Pai C.-Y."/>
            <person name="Sharf R."/>
            <person name="Halachmi N."/>
            <person name="Sun Y.H."/>
            <person name="Salzberg A."/>
        </authorList>
    </citation>
    <scope>FUNCTION</scope>
    <scope>INTERACTION WITH HTH</scope>
    <scope>SUBCELLULAR LOCATION</scope>
</reference>
<reference key="9">
    <citation type="journal article" date="1998" name="Genes Dev.">
        <title>The Homothorax homeoprotein activates the nuclear localization of another homeoprotein, extradenticle, and suppresses eye development in Drosophila.</title>
        <authorList>
            <person name="Pai C.-Y."/>
            <person name="Kuo T.-S."/>
            <person name="Jaw T.J."/>
            <person name="Kurant E."/>
            <person name="Chen C.-T."/>
            <person name="Bessarab D.A."/>
            <person name="Salzberg A."/>
            <person name="Sun Y.H."/>
        </authorList>
    </citation>
    <scope>FUNCTION</scope>
    <scope>INTERACTION WITH HTH</scope>
    <scope>SUBCELLULAR LOCATION</scope>
</reference>
<reference key="10">
    <citation type="journal article" date="1999" name="Nature">
        <title>Structure of a DNA-bound Ultrabithorax-Extradenticle homeodomain complex.</title>
        <authorList>
            <person name="Passner J.M."/>
            <person name="Ryoo H.-D."/>
            <person name="Shen L."/>
            <person name="Mann R.S."/>
            <person name="Aggarwal A.K."/>
        </authorList>
    </citation>
    <scope>X-RAY CRYSTALLOGRAPHY (2.4 ANGSTROMS) OF 238-300 IN COMPLEX WITH UBX</scope>
</reference>
<name>EXD_DROME</name>
<keyword id="KW-0002">3D-structure</keyword>
<keyword id="KW-0217">Developmental protein</keyword>
<keyword id="KW-0238">DNA-binding</keyword>
<keyword id="KW-0371">Homeobox</keyword>
<keyword id="KW-0539">Nucleus</keyword>
<keyword id="KW-1185">Reference proteome</keyword>
<keyword id="KW-0804">Transcription</keyword>
<keyword id="KW-0805">Transcription regulation</keyword>
<sequence>MEDPNRMLAHTGGMMAPQGYGLSGQDDGQNAGSENEVRKQKDIGEILQQIMSISEQSLDEAQARKHTLNCHRMKPALFSVLCEIKEKTVLSIRNTQEEEPPDPQLMRLDNMLIAEGVAGPEKGGGGAAAASAAAASQGGSLSIDGADNAIEHSDYRAKLAQIRQIYHQELEKYEQACNEFTTHVMNLLREQSRTRPITPKEIERMVQIIHKKFSSIQMQLKQSTCEAVMILRSRFLDARRKRRNFSKQASEILNEYFYSHLSNPYPSEEAKEELARKCGITVSQVSNWFGNKRIRYKKNIGKAQEEANLYAAKKAAGASPYSMAGPPSGTTTPMMSPAPPQDSMGYPMGSGGYDQQQPYDNSMGGYDPNLHQDLSP</sequence>
<evidence type="ECO:0000255" key="1">
    <source>
        <dbReference type="PROSITE-ProRule" id="PRU00108"/>
    </source>
</evidence>
<evidence type="ECO:0000255" key="2">
    <source>
        <dbReference type="PROSITE-ProRule" id="PRU01322"/>
    </source>
</evidence>
<evidence type="ECO:0000256" key="3">
    <source>
        <dbReference type="SAM" id="MobiDB-lite"/>
    </source>
</evidence>
<evidence type="ECO:0000269" key="4">
    <source>
    </source>
</evidence>
<evidence type="ECO:0000269" key="5">
    <source>
    </source>
</evidence>
<evidence type="ECO:0000269" key="6">
    <source>
    </source>
</evidence>
<evidence type="ECO:0000269" key="7">
    <source>
    </source>
</evidence>
<evidence type="ECO:0000269" key="8">
    <source>
    </source>
</evidence>
<evidence type="ECO:0000269" key="9">
    <source>
    </source>
</evidence>
<evidence type="ECO:0000269" key="10">
    <source>
    </source>
</evidence>
<evidence type="ECO:0000305" key="11"/>
<evidence type="ECO:0007829" key="12">
    <source>
        <dbReference type="PDB" id="4CYC"/>
    </source>
</evidence>
<evidence type="ECO:0007829" key="13">
    <source>
        <dbReference type="PDB" id="5ZJR"/>
    </source>
</evidence>
<evidence type="ECO:0007829" key="14">
    <source>
        <dbReference type="PDB" id="5ZJT"/>
    </source>
</evidence>